<accession>P60093</accession>
<protein>
    <recommendedName>
        <fullName evidence="1">Ribosomal protein L11 methyltransferase</fullName>
        <shortName evidence="1">L11 Mtase</shortName>
        <ecNumber evidence="1">2.1.1.-</ecNumber>
    </recommendedName>
</protein>
<evidence type="ECO:0000255" key="1">
    <source>
        <dbReference type="HAMAP-Rule" id="MF_00735"/>
    </source>
</evidence>
<evidence type="ECO:0000305" key="2"/>
<gene>
    <name evidence="1" type="primary">prmA</name>
    <name type="ordered locus">PG_0635</name>
</gene>
<reference key="1">
    <citation type="journal article" date="2003" name="J. Bacteriol.">
        <title>Complete genome sequence of the oral pathogenic bacterium Porphyromonas gingivalis strain W83.</title>
        <authorList>
            <person name="Nelson K.E."/>
            <person name="Fleischmann R.D."/>
            <person name="DeBoy R.T."/>
            <person name="Paulsen I.T."/>
            <person name="Fouts D.E."/>
            <person name="Eisen J.A."/>
            <person name="Daugherty S.C."/>
            <person name="Dodson R.J."/>
            <person name="Durkin A.S."/>
            <person name="Gwinn M.L."/>
            <person name="Haft D.H."/>
            <person name="Kolonay J.F."/>
            <person name="Nelson W.C."/>
            <person name="Mason T.M."/>
            <person name="Tallon L."/>
            <person name="Gray J."/>
            <person name="Granger D."/>
            <person name="Tettelin H."/>
            <person name="Dong H."/>
            <person name="Galvin J.L."/>
            <person name="Duncan M.J."/>
            <person name="Dewhirst F.E."/>
            <person name="Fraser C.M."/>
        </authorList>
    </citation>
    <scope>NUCLEOTIDE SEQUENCE [LARGE SCALE GENOMIC DNA]</scope>
    <source>
        <strain>ATCC BAA-308 / W83</strain>
    </source>
</reference>
<comment type="function">
    <text evidence="1">Methylates ribosomal protein L11.</text>
</comment>
<comment type="catalytic activity">
    <reaction evidence="1">
        <text>L-lysyl-[protein] + 3 S-adenosyl-L-methionine = N(6),N(6),N(6)-trimethyl-L-lysyl-[protein] + 3 S-adenosyl-L-homocysteine + 3 H(+)</text>
        <dbReference type="Rhea" id="RHEA:54192"/>
        <dbReference type="Rhea" id="RHEA-COMP:9752"/>
        <dbReference type="Rhea" id="RHEA-COMP:13826"/>
        <dbReference type="ChEBI" id="CHEBI:15378"/>
        <dbReference type="ChEBI" id="CHEBI:29969"/>
        <dbReference type="ChEBI" id="CHEBI:57856"/>
        <dbReference type="ChEBI" id="CHEBI:59789"/>
        <dbReference type="ChEBI" id="CHEBI:61961"/>
    </reaction>
</comment>
<comment type="subcellular location">
    <subcellularLocation>
        <location evidence="1">Cytoplasm</location>
    </subcellularLocation>
</comment>
<comment type="similarity">
    <text evidence="1">Belongs to the methyltransferase superfamily. PrmA family.</text>
</comment>
<comment type="sequence caution" evidence="2">
    <conflict type="erroneous initiation">
        <sequence resource="EMBL-CDS" id="AAQ65819"/>
    </conflict>
</comment>
<organism>
    <name type="scientific">Porphyromonas gingivalis (strain ATCC BAA-308 / W83)</name>
    <dbReference type="NCBI Taxonomy" id="242619"/>
    <lineage>
        <taxon>Bacteria</taxon>
        <taxon>Pseudomonadati</taxon>
        <taxon>Bacteroidota</taxon>
        <taxon>Bacteroidia</taxon>
        <taxon>Bacteroidales</taxon>
        <taxon>Porphyromonadaceae</taxon>
        <taxon>Porphyromonas</taxon>
    </lineage>
</organism>
<sequence length="290" mass="32592">MKYIAYAFELTHRPDELTLETAYDLLSAELAEIGFESFEQNETCLRAYIPVSTDIASDIPALLEQFPLPGLLWQYSSEIQPDINWNEQWEKNFFRPIRIEDKCLVRAPFHPTDPDIPLELIISPQMAFGTGHHETTSLMMSYLLDMDLRGLRVLDMGCGTGILAILARKLGASSVTAIDIDDWCIRNTGENAALNDIRDIDVRIGDASLLADCPMFDLIIANINRNILLDDMSAYRSRLGNGGTLLLSGFYTEDIPILTECAEILGLTLSETRSRNNWAALRFTPDSPKR</sequence>
<feature type="chain" id="PRO_0000192288" description="Ribosomal protein L11 methyltransferase">
    <location>
        <begin position="1"/>
        <end position="290"/>
    </location>
</feature>
<feature type="binding site" evidence="1">
    <location>
        <position position="136"/>
    </location>
    <ligand>
        <name>S-adenosyl-L-methionine</name>
        <dbReference type="ChEBI" id="CHEBI:59789"/>
    </ligand>
</feature>
<feature type="binding site" evidence="1">
    <location>
        <position position="157"/>
    </location>
    <ligand>
        <name>S-adenosyl-L-methionine</name>
        <dbReference type="ChEBI" id="CHEBI:59789"/>
    </ligand>
</feature>
<feature type="binding site" evidence="1">
    <location>
        <position position="179"/>
    </location>
    <ligand>
        <name>S-adenosyl-L-methionine</name>
        <dbReference type="ChEBI" id="CHEBI:59789"/>
    </ligand>
</feature>
<feature type="binding site" evidence="1">
    <location>
        <position position="222"/>
    </location>
    <ligand>
        <name>S-adenosyl-L-methionine</name>
        <dbReference type="ChEBI" id="CHEBI:59789"/>
    </ligand>
</feature>
<proteinExistence type="inferred from homology"/>
<name>PRMA_PORGI</name>
<dbReference type="EC" id="2.1.1.-" evidence="1"/>
<dbReference type="EMBL" id="AE015924">
    <property type="protein sequence ID" value="AAQ65819.1"/>
    <property type="status" value="ALT_INIT"/>
    <property type="molecule type" value="Genomic_DNA"/>
</dbReference>
<dbReference type="RefSeq" id="WP_005874505.1">
    <property type="nucleotide sequence ID" value="NC_002950.2"/>
</dbReference>
<dbReference type="SMR" id="P60093"/>
<dbReference type="STRING" id="242619.PG_0635"/>
<dbReference type="EnsemblBacteria" id="AAQ65819">
    <property type="protein sequence ID" value="AAQ65819"/>
    <property type="gene ID" value="PG_0635"/>
</dbReference>
<dbReference type="KEGG" id="pgi:PG_0635"/>
<dbReference type="PATRIC" id="fig|242619.8.peg.581"/>
<dbReference type="eggNOG" id="COG2264">
    <property type="taxonomic scope" value="Bacteria"/>
</dbReference>
<dbReference type="HOGENOM" id="CLU_049382_0_0_10"/>
<dbReference type="BioCyc" id="PGIN242619:G1G02-590-MONOMER"/>
<dbReference type="Proteomes" id="UP000000588">
    <property type="component" value="Chromosome"/>
</dbReference>
<dbReference type="GO" id="GO:0005737">
    <property type="term" value="C:cytoplasm"/>
    <property type="evidence" value="ECO:0007669"/>
    <property type="project" value="UniProtKB-SubCell"/>
</dbReference>
<dbReference type="GO" id="GO:0016279">
    <property type="term" value="F:protein-lysine N-methyltransferase activity"/>
    <property type="evidence" value="ECO:0007669"/>
    <property type="project" value="RHEA"/>
</dbReference>
<dbReference type="GO" id="GO:0032259">
    <property type="term" value="P:methylation"/>
    <property type="evidence" value="ECO:0007669"/>
    <property type="project" value="UniProtKB-KW"/>
</dbReference>
<dbReference type="CDD" id="cd02440">
    <property type="entry name" value="AdoMet_MTases"/>
    <property type="match status" value="1"/>
</dbReference>
<dbReference type="Gene3D" id="3.40.50.150">
    <property type="entry name" value="Vaccinia Virus protein VP39"/>
    <property type="match status" value="1"/>
</dbReference>
<dbReference type="HAMAP" id="MF_00735">
    <property type="entry name" value="Methyltr_PrmA"/>
    <property type="match status" value="1"/>
</dbReference>
<dbReference type="InterPro" id="IPR050078">
    <property type="entry name" value="Ribosomal_L11_MeTrfase_PrmA"/>
</dbReference>
<dbReference type="InterPro" id="IPR004498">
    <property type="entry name" value="Ribosomal_PrmA_MeTrfase"/>
</dbReference>
<dbReference type="InterPro" id="IPR029063">
    <property type="entry name" value="SAM-dependent_MTases_sf"/>
</dbReference>
<dbReference type="NCBIfam" id="NF001785">
    <property type="entry name" value="PRK00517.2-2"/>
    <property type="match status" value="1"/>
</dbReference>
<dbReference type="PANTHER" id="PTHR43648">
    <property type="entry name" value="ELECTRON TRANSFER FLAVOPROTEIN BETA SUBUNIT LYSINE METHYLTRANSFERASE"/>
    <property type="match status" value="1"/>
</dbReference>
<dbReference type="PANTHER" id="PTHR43648:SF1">
    <property type="entry name" value="ELECTRON TRANSFER FLAVOPROTEIN BETA SUBUNIT LYSINE METHYLTRANSFERASE"/>
    <property type="match status" value="1"/>
</dbReference>
<dbReference type="Pfam" id="PF06325">
    <property type="entry name" value="PrmA"/>
    <property type="match status" value="1"/>
</dbReference>
<dbReference type="SUPFAM" id="SSF53335">
    <property type="entry name" value="S-adenosyl-L-methionine-dependent methyltransferases"/>
    <property type="match status" value="1"/>
</dbReference>
<keyword id="KW-0963">Cytoplasm</keyword>
<keyword id="KW-0489">Methyltransferase</keyword>
<keyword id="KW-1185">Reference proteome</keyword>
<keyword id="KW-0949">S-adenosyl-L-methionine</keyword>
<keyword id="KW-0808">Transferase</keyword>